<name>RISB_CLOB1</name>
<reference key="1">
    <citation type="journal article" date="2007" name="PLoS ONE">
        <title>Analysis of the neurotoxin complex genes in Clostridium botulinum A1-A4 and B1 strains: BoNT/A3, /Ba4 and /B1 clusters are located within plasmids.</title>
        <authorList>
            <person name="Smith T.J."/>
            <person name="Hill K.K."/>
            <person name="Foley B.T."/>
            <person name="Detter J.C."/>
            <person name="Munk A.C."/>
            <person name="Bruce D.C."/>
            <person name="Doggett N.A."/>
            <person name="Smith L.A."/>
            <person name="Marks J.D."/>
            <person name="Xie G."/>
            <person name="Brettin T.S."/>
        </authorList>
    </citation>
    <scope>NUCLEOTIDE SEQUENCE [LARGE SCALE GENOMIC DNA]</scope>
    <source>
        <strain>ATCC 19397 / Type A</strain>
    </source>
</reference>
<gene>
    <name evidence="1" type="primary">ribH</name>
    <name type="ordered locus">CLB_2829</name>
</gene>
<protein>
    <recommendedName>
        <fullName evidence="1">6,7-dimethyl-8-ribityllumazine synthase</fullName>
        <shortName evidence="1">DMRL synthase</shortName>
        <shortName evidence="1">LS</shortName>
        <shortName evidence="1">Lumazine synthase</shortName>
        <ecNumber evidence="1">2.5.1.78</ecNumber>
    </recommendedName>
</protein>
<accession>A7FXC4</accession>
<evidence type="ECO:0000255" key="1">
    <source>
        <dbReference type="HAMAP-Rule" id="MF_00178"/>
    </source>
</evidence>
<keyword id="KW-0686">Riboflavin biosynthesis</keyword>
<keyword id="KW-0808">Transferase</keyword>
<feature type="chain" id="PRO_1000040402" description="6,7-dimethyl-8-ribityllumazine synthase">
    <location>
        <begin position="1"/>
        <end position="154"/>
    </location>
</feature>
<feature type="active site" description="Proton donor" evidence="1">
    <location>
        <position position="88"/>
    </location>
</feature>
<feature type="binding site" evidence="1">
    <location>
        <position position="22"/>
    </location>
    <ligand>
        <name>5-amino-6-(D-ribitylamino)uracil</name>
        <dbReference type="ChEBI" id="CHEBI:15934"/>
    </ligand>
</feature>
<feature type="binding site" evidence="1">
    <location>
        <begin position="56"/>
        <end position="58"/>
    </location>
    <ligand>
        <name>5-amino-6-(D-ribitylamino)uracil</name>
        <dbReference type="ChEBI" id="CHEBI:15934"/>
    </ligand>
</feature>
<feature type="binding site" evidence="1">
    <location>
        <begin position="80"/>
        <end position="82"/>
    </location>
    <ligand>
        <name>5-amino-6-(D-ribitylamino)uracil</name>
        <dbReference type="ChEBI" id="CHEBI:15934"/>
    </ligand>
</feature>
<feature type="binding site" evidence="1">
    <location>
        <begin position="85"/>
        <end position="86"/>
    </location>
    <ligand>
        <name>(2S)-2-hydroxy-3-oxobutyl phosphate</name>
        <dbReference type="ChEBI" id="CHEBI:58830"/>
    </ligand>
</feature>
<feature type="binding site" evidence="1">
    <location>
        <position position="113"/>
    </location>
    <ligand>
        <name>5-amino-6-(D-ribitylamino)uracil</name>
        <dbReference type="ChEBI" id="CHEBI:15934"/>
    </ligand>
</feature>
<feature type="binding site" evidence="1">
    <location>
        <position position="127"/>
    </location>
    <ligand>
        <name>(2S)-2-hydroxy-3-oxobutyl phosphate</name>
        <dbReference type="ChEBI" id="CHEBI:58830"/>
    </ligand>
</feature>
<sequence>MKIYEGRLTAEGLKVGIIVSRFNEFITSKLLAGSIDCLKRHGAKEDNIEVCWVPGAFEIPVIAKKMASKGKYDAVICLGAVIRGATPHFDYVSSEVSKGVAHVSLDKEVPVIFGVLTTDTIEQAIERAGTKAGNKGYDAAMSAIEMSNLMKVLD</sequence>
<comment type="function">
    <text evidence="1">Catalyzes the formation of 6,7-dimethyl-8-ribityllumazine by condensation of 5-amino-6-(D-ribitylamino)uracil with 3,4-dihydroxy-2-butanone 4-phosphate. This is the penultimate step in the biosynthesis of riboflavin.</text>
</comment>
<comment type="catalytic activity">
    <reaction evidence="1">
        <text>(2S)-2-hydroxy-3-oxobutyl phosphate + 5-amino-6-(D-ribitylamino)uracil = 6,7-dimethyl-8-(1-D-ribityl)lumazine + phosphate + 2 H2O + H(+)</text>
        <dbReference type="Rhea" id="RHEA:26152"/>
        <dbReference type="ChEBI" id="CHEBI:15377"/>
        <dbReference type="ChEBI" id="CHEBI:15378"/>
        <dbReference type="ChEBI" id="CHEBI:15934"/>
        <dbReference type="ChEBI" id="CHEBI:43474"/>
        <dbReference type="ChEBI" id="CHEBI:58201"/>
        <dbReference type="ChEBI" id="CHEBI:58830"/>
        <dbReference type="EC" id="2.5.1.78"/>
    </reaction>
</comment>
<comment type="pathway">
    <text evidence="1">Cofactor biosynthesis; riboflavin biosynthesis; riboflavin from 2-hydroxy-3-oxobutyl phosphate and 5-amino-6-(D-ribitylamino)uracil: step 1/2.</text>
</comment>
<comment type="similarity">
    <text evidence="1">Belongs to the DMRL synthase family.</text>
</comment>
<dbReference type="EC" id="2.5.1.78" evidence="1"/>
<dbReference type="EMBL" id="CP000726">
    <property type="protein sequence ID" value="ABS32760.1"/>
    <property type="molecule type" value="Genomic_DNA"/>
</dbReference>
<dbReference type="SMR" id="A7FXC4"/>
<dbReference type="KEGG" id="cba:CLB_2829"/>
<dbReference type="HOGENOM" id="CLU_089358_1_1_9"/>
<dbReference type="UniPathway" id="UPA00275">
    <property type="reaction ID" value="UER00404"/>
</dbReference>
<dbReference type="GO" id="GO:0005829">
    <property type="term" value="C:cytosol"/>
    <property type="evidence" value="ECO:0007669"/>
    <property type="project" value="TreeGrafter"/>
</dbReference>
<dbReference type="GO" id="GO:0009349">
    <property type="term" value="C:riboflavin synthase complex"/>
    <property type="evidence" value="ECO:0007669"/>
    <property type="project" value="InterPro"/>
</dbReference>
<dbReference type="GO" id="GO:0000906">
    <property type="term" value="F:6,7-dimethyl-8-ribityllumazine synthase activity"/>
    <property type="evidence" value="ECO:0007669"/>
    <property type="project" value="UniProtKB-UniRule"/>
</dbReference>
<dbReference type="GO" id="GO:0009231">
    <property type="term" value="P:riboflavin biosynthetic process"/>
    <property type="evidence" value="ECO:0007669"/>
    <property type="project" value="UniProtKB-UniRule"/>
</dbReference>
<dbReference type="CDD" id="cd09209">
    <property type="entry name" value="Lumazine_synthase-I"/>
    <property type="match status" value="1"/>
</dbReference>
<dbReference type="FunFam" id="3.40.50.960:FF:000001">
    <property type="entry name" value="6,7-dimethyl-8-ribityllumazine synthase"/>
    <property type="match status" value="1"/>
</dbReference>
<dbReference type="Gene3D" id="3.40.50.960">
    <property type="entry name" value="Lumazine/riboflavin synthase"/>
    <property type="match status" value="1"/>
</dbReference>
<dbReference type="HAMAP" id="MF_00178">
    <property type="entry name" value="Lumazine_synth"/>
    <property type="match status" value="1"/>
</dbReference>
<dbReference type="InterPro" id="IPR034964">
    <property type="entry name" value="LS"/>
</dbReference>
<dbReference type="InterPro" id="IPR002180">
    <property type="entry name" value="LS/RS"/>
</dbReference>
<dbReference type="InterPro" id="IPR036467">
    <property type="entry name" value="LS/RS_sf"/>
</dbReference>
<dbReference type="NCBIfam" id="TIGR00114">
    <property type="entry name" value="lumazine-synth"/>
    <property type="match status" value="1"/>
</dbReference>
<dbReference type="NCBIfam" id="NF000812">
    <property type="entry name" value="PRK00061.1-4"/>
    <property type="match status" value="1"/>
</dbReference>
<dbReference type="PANTHER" id="PTHR21058:SF0">
    <property type="entry name" value="6,7-DIMETHYL-8-RIBITYLLUMAZINE SYNTHASE"/>
    <property type="match status" value="1"/>
</dbReference>
<dbReference type="PANTHER" id="PTHR21058">
    <property type="entry name" value="6,7-DIMETHYL-8-RIBITYLLUMAZINE SYNTHASE DMRL SYNTHASE LUMAZINE SYNTHASE"/>
    <property type="match status" value="1"/>
</dbReference>
<dbReference type="Pfam" id="PF00885">
    <property type="entry name" value="DMRL_synthase"/>
    <property type="match status" value="1"/>
</dbReference>
<dbReference type="SUPFAM" id="SSF52121">
    <property type="entry name" value="Lumazine synthase"/>
    <property type="match status" value="1"/>
</dbReference>
<organism>
    <name type="scientific">Clostridium botulinum (strain ATCC 19397 / Type A)</name>
    <dbReference type="NCBI Taxonomy" id="441770"/>
    <lineage>
        <taxon>Bacteria</taxon>
        <taxon>Bacillati</taxon>
        <taxon>Bacillota</taxon>
        <taxon>Clostridia</taxon>
        <taxon>Eubacteriales</taxon>
        <taxon>Clostridiaceae</taxon>
        <taxon>Clostridium</taxon>
    </lineage>
</organism>
<proteinExistence type="inferred from homology"/>